<sequence length="531" mass="62022">MFKAIRRVFTMIPRIQLTEKETRICNLLKDYTAHYNSLHYGQEPLTLRITGGWVRDKLLGQGSHDLDIAINIMSGEEFATGLNGYLLEHFDKYGVKPHSIHKIDKNPEKSKHLETATTKLFDVEVDFVNLRSEEYTEDSRIPTTQFGTPEEDALRRDATLNALFYNIQQDAVEDFTKRGWQDLQDGVLRTPLPARQTFLDDPLRVLRLIRFASRFNFNIEAGVLKEMHDPEINEAFNNKISRERIGVEMEKILVGPNPILGLKLIQRTHLENVIFLWHGDQSVIEYNRKNWPQTKDVEDIYKKGIFNHHLKNFIHHYKDFLSRYLKLRQAIETKDKSFQQNFLLASILIPMADLKIIALPKKKLNNTLPVSESIVREGLKFNKASSIVVARCVENIAAYNSMVEKYLQSGDLKRSEVGTFLRELRGDWEIVHYVSLMDQYLKYISRKDNVVNIIDKYDRFWNYIQEQNLQDSDKMVPIIDGKRMVKILETKPGPWLGKINDEVILWQFDHPQGTEQELISFIKSILPNYLQ</sequence>
<protein>
    <recommendedName>
        <fullName>CCA tRNA nucleotidyltransferase, mitochondrial</fullName>
        <ecNumber evidence="1">2.7.7.72</ecNumber>
    </recommendedName>
    <alternativeName>
        <fullName>CCA-adding enzyme</fullName>
    </alternativeName>
    <alternativeName>
        <fullName>tRNA CCA-pyrophosphorylase</fullName>
    </alternativeName>
    <alternativeName>
        <fullName>tRNA adenylyltransferase</fullName>
    </alternativeName>
    <alternativeName>
        <fullName>tRNA nucleotidyltransferase</fullName>
    </alternativeName>
</protein>
<reference key="1">
    <citation type="journal article" date="2002" name="Yeast">
        <title>Characterization of a gene encoding tRNA nucleotidyltransferase from Candida glabrata.</title>
        <authorList>
            <person name="Hanic-Joyce P.J."/>
            <person name="Joyce P.B.M."/>
        </authorList>
    </citation>
    <scope>NUCLEOTIDE SEQUENCE [GENOMIC DNA]</scope>
    <scope>FUNCTION</scope>
    <scope>MUTAGENESIS OF ASP-65 AND ASP-67</scope>
    <source>
        <strain>ATCC 2001 / BCRC 20586 / JCM 3761 / NBRC 0622 / NRRL Y-65 / CBS 138</strain>
    </source>
</reference>
<reference key="2">
    <citation type="journal article" date="2004" name="Nature">
        <title>Genome evolution in yeasts.</title>
        <authorList>
            <person name="Dujon B."/>
            <person name="Sherman D."/>
            <person name="Fischer G."/>
            <person name="Durrens P."/>
            <person name="Casaregola S."/>
            <person name="Lafontaine I."/>
            <person name="de Montigny J."/>
            <person name="Marck C."/>
            <person name="Neuveglise C."/>
            <person name="Talla E."/>
            <person name="Goffard N."/>
            <person name="Frangeul L."/>
            <person name="Aigle M."/>
            <person name="Anthouard V."/>
            <person name="Babour A."/>
            <person name="Barbe V."/>
            <person name="Barnay S."/>
            <person name="Blanchin S."/>
            <person name="Beckerich J.-M."/>
            <person name="Beyne E."/>
            <person name="Bleykasten C."/>
            <person name="Boisrame A."/>
            <person name="Boyer J."/>
            <person name="Cattolico L."/>
            <person name="Confanioleri F."/>
            <person name="de Daruvar A."/>
            <person name="Despons L."/>
            <person name="Fabre E."/>
            <person name="Fairhead C."/>
            <person name="Ferry-Dumazet H."/>
            <person name="Groppi A."/>
            <person name="Hantraye F."/>
            <person name="Hennequin C."/>
            <person name="Jauniaux N."/>
            <person name="Joyet P."/>
            <person name="Kachouri R."/>
            <person name="Kerrest A."/>
            <person name="Koszul R."/>
            <person name="Lemaire M."/>
            <person name="Lesur I."/>
            <person name="Ma L."/>
            <person name="Muller H."/>
            <person name="Nicaud J.-M."/>
            <person name="Nikolski M."/>
            <person name="Oztas S."/>
            <person name="Ozier-Kalogeropoulos O."/>
            <person name="Pellenz S."/>
            <person name="Potier S."/>
            <person name="Richard G.-F."/>
            <person name="Straub M.-L."/>
            <person name="Suleau A."/>
            <person name="Swennen D."/>
            <person name="Tekaia F."/>
            <person name="Wesolowski-Louvel M."/>
            <person name="Westhof E."/>
            <person name="Wirth B."/>
            <person name="Zeniou-Meyer M."/>
            <person name="Zivanovic Y."/>
            <person name="Bolotin-Fukuhara M."/>
            <person name="Thierry A."/>
            <person name="Bouchier C."/>
            <person name="Caudron B."/>
            <person name="Scarpelli C."/>
            <person name="Gaillardin C."/>
            <person name="Weissenbach J."/>
            <person name="Wincker P."/>
            <person name="Souciet J.-L."/>
        </authorList>
    </citation>
    <scope>NUCLEOTIDE SEQUENCE [LARGE SCALE GENOMIC DNA]</scope>
    <source>
        <strain>ATCC 2001 / BCRC 20586 / JCM 3761 / NBRC 0622 / NRRL Y-65 / CBS 138</strain>
    </source>
</reference>
<accession>Q9P4S5</accession>
<accession>Q6FKG1</accession>
<evidence type="ECO:0000250" key="1">
    <source>
        <dbReference type="UniProtKB" id="P21269"/>
    </source>
</evidence>
<evidence type="ECO:0000250" key="2">
    <source>
        <dbReference type="UniProtKB" id="Q96Q11"/>
    </source>
</evidence>
<evidence type="ECO:0000255" key="3"/>
<evidence type="ECO:0000269" key="4">
    <source>
    </source>
</evidence>
<evidence type="ECO:0000305" key="5"/>
<comment type="function">
    <text evidence="2 4">Nucleotidyltransferase that catalyzes the addition and repair of the essential 3'-terminal CCA sequence in tRNAs, which is necessary for the attachment of amino acids to the 3' terminus of tRNA molecules, using CTP and ATP as substrates (PubMed:12478587). tRNA 3'-terminal CCA addition is required both for tRNA processing and repair (By similarity). Also involved in tRNA surveillance by mediating tandem CCA addition to generate a CCACCA at the 3' terminus of unstable tRNAs (By similarity). While stable tRNAs receive only 3'-terminal CCA, unstable tRNAs are marked with CCACCA and rapidly degraded (By similarity). The structural flexibility of RNA controls the choice between CCA versus CCACCA addition: following the first CCA addition cycle, nucleotide-binding to the active site triggers a clockwise screw motion, producing torque on the RNA (By similarity). This ejects stable RNAs, whereas unstable RNAs are refolded while bound to the enzyme and subjected to a second CCA catalytic cycle (By similarity).</text>
</comment>
<comment type="catalytic activity">
    <reaction evidence="1">
        <text>a tRNA precursor + 2 CTP + ATP = a tRNA with a 3' CCA end + 3 diphosphate</text>
        <dbReference type="Rhea" id="RHEA:14433"/>
        <dbReference type="Rhea" id="RHEA-COMP:10465"/>
        <dbReference type="Rhea" id="RHEA-COMP:10468"/>
        <dbReference type="ChEBI" id="CHEBI:30616"/>
        <dbReference type="ChEBI" id="CHEBI:33019"/>
        <dbReference type="ChEBI" id="CHEBI:37563"/>
        <dbReference type="ChEBI" id="CHEBI:74896"/>
        <dbReference type="ChEBI" id="CHEBI:83071"/>
        <dbReference type="EC" id="2.7.7.72"/>
    </reaction>
</comment>
<comment type="subcellular location">
    <subcellularLocation>
        <location evidence="1">Mitochondrion</location>
    </subcellularLocation>
    <subcellularLocation>
        <location evidence="1">Cytoplasm</location>
    </subcellularLocation>
    <subcellularLocation>
        <location evidence="1">Nucleus</location>
    </subcellularLocation>
</comment>
<comment type="alternative products">
    <event type="alternative initiation"/>
    <isoform>
        <id>Q9P4S5-1</id>
        <name>Mitochondrial</name>
        <sequence type="displayed"/>
    </isoform>
    <isoform>
        <id>Q9P4S5-2</id>
        <name>Cytoplasmic+nuclear</name>
        <sequence type="described" ref="VSP_018697"/>
    </isoform>
</comment>
<comment type="similarity">
    <text evidence="5">Belongs to the tRNA nucleotidyltransferase/poly(A) polymerase family.</text>
</comment>
<proteinExistence type="evidence at protein level"/>
<gene>
    <name type="primary">CCA1</name>
    <name type="ordered locus">CAGL0L11858g</name>
</gene>
<keyword id="KW-0024">Alternative initiation</keyword>
<keyword id="KW-0067">ATP-binding</keyword>
<keyword id="KW-0963">Cytoplasm</keyword>
<keyword id="KW-0496">Mitochondrion</keyword>
<keyword id="KW-0547">Nucleotide-binding</keyword>
<keyword id="KW-0548">Nucleotidyltransferase</keyword>
<keyword id="KW-0539">Nucleus</keyword>
<keyword id="KW-1185">Reference proteome</keyword>
<keyword id="KW-0694">RNA-binding</keyword>
<keyword id="KW-0808">Transferase</keyword>
<keyword id="KW-0809">Transit peptide</keyword>
<feature type="transit peptide" description="Mitochondrion" evidence="3">
    <location>
        <begin position="1"/>
        <end status="unknown"/>
    </location>
</feature>
<feature type="chain" id="PRO_0000004778" description="CCA tRNA nucleotidyltransferase, mitochondrial">
    <location>
        <begin status="unknown"/>
        <end position="531"/>
    </location>
</feature>
<feature type="splice variant" id="VSP_018697" description="In isoform Cytoplasmic+nuclear." evidence="5">
    <location>
        <begin position="1"/>
        <end position="10"/>
    </location>
</feature>
<feature type="mutagenesis site" description="Eliminates incorporation of CTP and ATP." evidence="4">
    <original>D</original>
    <variation>A</variation>
    <location>
        <position position="65"/>
    </location>
</feature>
<feature type="mutagenesis site" description="Eliminates incorporation of CTP and ATP." evidence="4">
    <original>D</original>
    <variation>A</variation>
    <location>
        <position position="67"/>
    </location>
</feature>
<feature type="mutagenesis site" description="Lethal." evidence="4">
    <original>D</original>
    <variation>E</variation>
    <location>
        <position position="67"/>
    </location>
</feature>
<feature type="sequence conflict" description="In Ref. 1; AAF78448." evidence="5" ref="1">
    <original>T</original>
    <variation>N</variation>
    <location>
        <position position="80"/>
    </location>
</feature>
<feature type="sequence conflict" description="In Ref. 1; AAF78448." evidence="5" ref="1">
    <original>A</original>
    <variation>R</variation>
    <location>
        <position position="358"/>
    </location>
</feature>
<feature type="sequence conflict" description="In Ref. 1; AAF78448." evidence="5" ref="1">
    <original>V</original>
    <variation>D</variation>
    <location>
        <position position="389"/>
    </location>
</feature>
<feature type="sequence conflict" description="In Ref. 1; AAF78448." evidence="5" ref="1">
    <original>L</original>
    <variation>I</variation>
    <location>
        <position position="496"/>
    </location>
</feature>
<feature type="sequence conflict" description="In Ref. 1; AAF78448." evidence="5" ref="1">
    <original>F</original>
    <variation>L</variation>
    <location>
        <position position="521"/>
    </location>
</feature>
<feature type="sequence conflict" description="In Ref. 1; AAF78448." evidence="5" ref="1">
    <original>Q</original>
    <variation>QCYMSAIYRFQIY</variation>
    <location>
        <position position="531"/>
    </location>
</feature>
<organism>
    <name type="scientific">Candida glabrata (strain ATCC 2001 / BCRC 20586 / JCM 3761 / NBRC 0622 / NRRL Y-65 / CBS 138)</name>
    <name type="common">Yeast</name>
    <name type="synonym">Nakaseomyces glabratus</name>
    <dbReference type="NCBI Taxonomy" id="284593"/>
    <lineage>
        <taxon>Eukaryota</taxon>
        <taxon>Fungi</taxon>
        <taxon>Dikarya</taxon>
        <taxon>Ascomycota</taxon>
        <taxon>Saccharomycotina</taxon>
        <taxon>Saccharomycetes</taxon>
        <taxon>Saccharomycetales</taxon>
        <taxon>Saccharomycetaceae</taxon>
        <taxon>Nakaseomyces</taxon>
    </lineage>
</organism>
<dbReference type="EC" id="2.7.7.72" evidence="1"/>
<dbReference type="EMBL" id="AF098803">
    <property type="protein sequence ID" value="AAF78448.1"/>
    <property type="molecule type" value="Genomic_DNA"/>
</dbReference>
<dbReference type="EMBL" id="CR380958">
    <property type="protein sequence ID" value="CAG62257.1"/>
    <property type="molecule type" value="Genomic_DNA"/>
</dbReference>
<dbReference type="RefSeq" id="XP_449283.1">
    <property type="nucleotide sequence ID" value="XM_449283.1"/>
</dbReference>
<dbReference type="FunCoup" id="Q9P4S5">
    <property type="interactions" value="148"/>
</dbReference>
<dbReference type="STRING" id="284593.Q9P4S5"/>
<dbReference type="EnsemblFungi" id="CAGL0L11858g-T">
    <molecule id="Q9P4S5-1"/>
    <property type="protein sequence ID" value="CAGL0L11858g-T-p1"/>
    <property type="gene ID" value="CAGL0L11858g"/>
</dbReference>
<dbReference type="GeneID" id="2890947"/>
<dbReference type="KEGG" id="cgr:2890947"/>
<dbReference type="CGD" id="CAL0135620">
    <property type="gene designation" value="CCA1"/>
</dbReference>
<dbReference type="VEuPathDB" id="FungiDB:CAGL0L11858g"/>
<dbReference type="eggNOG" id="KOG2159">
    <property type="taxonomic scope" value="Eukaryota"/>
</dbReference>
<dbReference type="HOGENOM" id="CLU_019592_2_1_1"/>
<dbReference type="InParanoid" id="Q9P4S5"/>
<dbReference type="OMA" id="WQKFLDH"/>
<dbReference type="Proteomes" id="UP000002428">
    <property type="component" value="Chromosome L"/>
</dbReference>
<dbReference type="GO" id="GO:0005759">
    <property type="term" value="C:mitochondrial matrix"/>
    <property type="evidence" value="ECO:0000316"/>
    <property type="project" value="CGD"/>
</dbReference>
<dbReference type="GO" id="GO:0005634">
    <property type="term" value="C:nucleus"/>
    <property type="evidence" value="ECO:0007669"/>
    <property type="project" value="UniProtKB-SubCell"/>
</dbReference>
<dbReference type="GO" id="GO:0005524">
    <property type="term" value="F:ATP binding"/>
    <property type="evidence" value="ECO:0007669"/>
    <property type="project" value="UniProtKB-KW"/>
</dbReference>
<dbReference type="GO" id="GO:0052929">
    <property type="term" value="F:ATP:3'-cytidine-cytidine-tRNA adenylyltransferase activity"/>
    <property type="evidence" value="ECO:0007669"/>
    <property type="project" value="EnsemblFungi"/>
</dbReference>
<dbReference type="GO" id="GO:0052927">
    <property type="term" value="F:CC tRNA cytidylyltransferase activity"/>
    <property type="evidence" value="ECO:0007669"/>
    <property type="project" value="EnsemblFungi"/>
</dbReference>
<dbReference type="GO" id="GO:0004810">
    <property type="term" value="F:CCA tRNA nucleotidyltransferase activity"/>
    <property type="evidence" value="ECO:0000316"/>
    <property type="project" value="CGD"/>
</dbReference>
<dbReference type="GO" id="GO:0003723">
    <property type="term" value="F:RNA binding"/>
    <property type="evidence" value="ECO:0007669"/>
    <property type="project" value="UniProtKB-KW"/>
</dbReference>
<dbReference type="GO" id="GO:0001680">
    <property type="term" value="P:tRNA 3'-terminal CCA addition"/>
    <property type="evidence" value="ECO:0000316"/>
    <property type="project" value="CGD"/>
</dbReference>
<dbReference type="CDD" id="cd05398">
    <property type="entry name" value="NT_ClassII-CCAase"/>
    <property type="match status" value="1"/>
</dbReference>
<dbReference type="FunFam" id="3.30.460.10:FF:000019">
    <property type="entry name" value="tRNA nucleotidyltransferase cca2"/>
    <property type="match status" value="1"/>
</dbReference>
<dbReference type="Gene3D" id="3.30.460.10">
    <property type="entry name" value="Beta Polymerase, domain 2"/>
    <property type="match status" value="1"/>
</dbReference>
<dbReference type="Gene3D" id="1.10.3090.10">
    <property type="entry name" value="cca-adding enzyme, domain 2"/>
    <property type="match status" value="1"/>
</dbReference>
<dbReference type="InterPro" id="IPR043519">
    <property type="entry name" value="NT_sf"/>
</dbReference>
<dbReference type="InterPro" id="IPR002646">
    <property type="entry name" value="PolA_pol_head_dom"/>
</dbReference>
<dbReference type="InterPro" id="IPR032828">
    <property type="entry name" value="PolyA_RNA-bd"/>
</dbReference>
<dbReference type="PANTHER" id="PTHR13734:SF5">
    <property type="entry name" value="CCA TRNA NUCLEOTIDYLTRANSFERASE, MITOCHONDRIAL"/>
    <property type="match status" value="1"/>
</dbReference>
<dbReference type="PANTHER" id="PTHR13734">
    <property type="entry name" value="TRNA-NUCLEOTIDYLTRANSFERASE"/>
    <property type="match status" value="1"/>
</dbReference>
<dbReference type="Pfam" id="PF01743">
    <property type="entry name" value="PolyA_pol"/>
    <property type="match status" value="1"/>
</dbReference>
<dbReference type="Pfam" id="PF12627">
    <property type="entry name" value="PolyA_pol_RNAbd"/>
    <property type="match status" value="1"/>
</dbReference>
<dbReference type="SUPFAM" id="SSF81301">
    <property type="entry name" value="Nucleotidyltransferase"/>
    <property type="match status" value="1"/>
</dbReference>
<dbReference type="SUPFAM" id="SSF81891">
    <property type="entry name" value="Poly A polymerase C-terminal region-like"/>
    <property type="match status" value="1"/>
</dbReference>
<name>CCA1_CANGA</name>